<sequence length="696" mass="77208">MAREYKIEDYRNFGIMAHIDAGKTTTTERVLYYTGKSHKIGEVHDGAATMDWMEQEQERGITITSAATTTFWKGRDGKMRRFNIIDTPGHVDFTIEVERSLRVLDGAIALLDANAGVEPQTETVWRQADKYRVPRMIFCNKMDKIGADFYRSVEMIGSRLGAQAVVMQLPIGAETEFKGVVDLVEMNALVWRDETLGAAWDVVEIPADLQARAQEYREKMIEAAVEMDETALENYLEGKMPSNDEIRSLIRKGTIAVKFFPMFCGSAFKNKGVQPLLDAVVEYLPSPADVPAIKGVDAKTDAEIERHAVDDEPLSMLAFKIMNDPFVGSLTFARIYSGKLTKGISVDNTVKGKKERIGRMLQMHANSRADVEEAFAGDIVALAGLKDTTTGDTLCDPLHPVILERMEFPDPVIQIAIEPKTKNDQEKMGLALHRLAAEDPSFRVKTDEESGQTIISGMGELHLDIIVDRMRREFKVEANVGAPQVAYRETITRKHEQDYTHKKQTGGTGQFARVKVLFEPNTESEEFVFESKIVGGAVPKEYIPGVEKGIQSVMGAGPFAGFPMIGVRATLIDGAYHDVDSSVLAFEIASRACFREAAPKLGVQLLEPIMKVEVVTPEDYVGSVIGDLNGRRGQIQGQEARGVAVVINAMVPLANMFKYVDNLRSMSQGRAAYTMQFDHYEPVPTAVAQEVQKKYA</sequence>
<keyword id="KW-0963">Cytoplasm</keyword>
<keyword id="KW-0251">Elongation factor</keyword>
<keyword id="KW-0342">GTP-binding</keyword>
<keyword id="KW-0547">Nucleotide-binding</keyword>
<keyword id="KW-0648">Protein biosynthesis</keyword>
<proteinExistence type="inferred from homology"/>
<evidence type="ECO:0000255" key="1">
    <source>
        <dbReference type="HAMAP-Rule" id="MF_00054"/>
    </source>
</evidence>
<comment type="function">
    <text evidence="1">Catalyzes the GTP-dependent ribosomal translocation step during translation elongation. During this step, the ribosome changes from the pre-translocational (PRE) to the post-translocational (POST) state as the newly formed A-site-bound peptidyl-tRNA and P-site-bound deacylated tRNA move to the P and E sites, respectively. Catalyzes the coordinated movement of the two tRNA molecules, the mRNA and conformational changes in the ribosome.</text>
</comment>
<comment type="subcellular location">
    <subcellularLocation>
        <location evidence="1">Cytoplasm</location>
    </subcellularLocation>
</comment>
<comment type="similarity">
    <text evidence="1">Belongs to the TRAFAC class translation factor GTPase superfamily. Classic translation factor GTPase family. EF-G/EF-2 subfamily.</text>
</comment>
<feature type="chain" id="PRO_0000091191" description="Elongation factor G">
    <location>
        <begin position="1"/>
        <end position="696"/>
    </location>
</feature>
<feature type="domain" description="tr-type G">
    <location>
        <begin position="8"/>
        <end position="288"/>
    </location>
</feature>
<feature type="binding site" evidence="1">
    <location>
        <begin position="17"/>
        <end position="24"/>
    </location>
    <ligand>
        <name>GTP</name>
        <dbReference type="ChEBI" id="CHEBI:37565"/>
    </ligand>
</feature>
<feature type="binding site" evidence="1">
    <location>
        <begin position="86"/>
        <end position="90"/>
    </location>
    <ligand>
        <name>GTP</name>
        <dbReference type="ChEBI" id="CHEBI:37565"/>
    </ligand>
</feature>
<feature type="binding site" evidence="1">
    <location>
        <begin position="140"/>
        <end position="143"/>
    </location>
    <ligand>
        <name>GTP</name>
        <dbReference type="ChEBI" id="CHEBI:37565"/>
    </ligand>
</feature>
<gene>
    <name evidence="1" type="primary">fusA</name>
    <name type="ordered locus">mlr0286</name>
</gene>
<dbReference type="EMBL" id="BA000012">
    <property type="protein sequence ID" value="BAB47903.1"/>
    <property type="molecule type" value="Genomic_DNA"/>
</dbReference>
<dbReference type="RefSeq" id="WP_010909271.1">
    <property type="nucleotide sequence ID" value="NC_002678.2"/>
</dbReference>
<dbReference type="SMR" id="Q98N59"/>
<dbReference type="GeneID" id="66684219"/>
<dbReference type="KEGG" id="mlo:mlr0286"/>
<dbReference type="eggNOG" id="COG0480">
    <property type="taxonomic scope" value="Bacteria"/>
</dbReference>
<dbReference type="HOGENOM" id="CLU_002794_4_1_5"/>
<dbReference type="Proteomes" id="UP000000552">
    <property type="component" value="Chromosome"/>
</dbReference>
<dbReference type="GO" id="GO:0005737">
    <property type="term" value="C:cytoplasm"/>
    <property type="evidence" value="ECO:0007669"/>
    <property type="project" value="UniProtKB-SubCell"/>
</dbReference>
<dbReference type="GO" id="GO:0005525">
    <property type="term" value="F:GTP binding"/>
    <property type="evidence" value="ECO:0007669"/>
    <property type="project" value="UniProtKB-UniRule"/>
</dbReference>
<dbReference type="GO" id="GO:0003924">
    <property type="term" value="F:GTPase activity"/>
    <property type="evidence" value="ECO:0007669"/>
    <property type="project" value="InterPro"/>
</dbReference>
<dbReference type="GO" id="GO:0003746">
    <property type="term" value="F:translation elongation factor activity"/>
    <property type="evidence" value="ECO:0007669"/>
    <property type="project" value="UniProtKB-UniRule"/>
</dbReference>
<dbReference type="GO" id="GO:0032790">
    <property type="term" value="P:ribosome disassembly"/>
    <property type="evidence" value="ECO:0007669"/>
    <property type="project" value="TreeGrafter"/>
</dbReference>
<dbReference type="CDD" id="cd01886">
    <property type="entry name" value="EF-G"/>
    <property type="match status" value="1"/>
</dbReference>
<dbReference type="CDD" id="cd16262">
    <property type="entry name" value="EFG_III"/>
    <property type="match status" value="1"/>
</dbReference>
<dbReference type="CDD" id="cd01434">
    <property type="entry name" value="EFG_mtEFG1_IV"/>
    <property type="match status" value="1"/>
</dbReference>
<dbReference type="CDD" id="cd03713">
    <property type="entry name" value="EFG_mtEFG_C"/>
    <property type="match status" value="1"/>
</dbReference>
<dbReference type="CDD" id="cd04088">
    <property type="entry name" value="EFG_mtEFG_II"/>
    <property type="match status" value="1"/>
</dbReference>
<dbReference type="FunFam" id="2.40.30.10:FF:000006">
    <property type="entry name" value="Elongation factor G"/>
    <property type="match status" value="1"/>
</dbReference>
<dbReference type="FunFam" id="3.30.230.10:FF:000003">
    <property type="entry name" value="Elongation factor G"/>
    <property type="match status" value="1"/>
</dbReference>
<dbReference type="FunFam" id="3.30.70.240:FF:000001">
    <property type="entry name" value="Elongation factor G"/>
    <property type="match status" value="1"/>
</dbReference>
<dbReference type="FunFam" id="3.30.70.870:FF:000001">
    <property type="entry name" value="Elongation factor G"/>
    <property type="match status" value="1"/>
</dbReference>
<dbReference type="FunFam" id="3.40.50.300:FF:000029">
    <property type="entry name" value="Elongation factor G"/>
    <property type="match status" value="1"/>
</dbReference>
<dbReference type="Gene3D" id="3.30.230.10">
    <property type="match status" value="1"/>
</dbReference>
<dbReference type="Gene3D" id="3.30.70.240">
    <property type="match status" value="1"/>
</dbReference>
<dbReference type="Gene3D" id="3.30.70.870">
    <property type="entry name" value="Elongation Factor G (Translational Gtpase), domain 3"/>
    <property type="match status" value="1"/>
</dbReference>
<dbReference type="Gene3D" id="3.40.50.300">
    <property type="entry name" value="P-loop containing nucleotide triphosphate hydrolases"/>
    <property type="match status" value="1"/>
</dbReference>
<dbReference type="Gene3D" id="2.40.30.10">
    <property type="entry name" value="Translation factors"/>
    <property type="match status" value="1"/>
</dbReference>
<dbReference type="HAMAP" id="MF_00054_B">
    <property type="entry name" value="EF_G_EF_2_B"/>
    <property type="match status" value="1"/>
</dbReference>
<dbReference type="InterPro" id="IPR053905">
    <property type="entry name" value="EF-G-like_DII"/>
</dbReference>
<dbReference type="InterPro" id="IPR041095">
    <property type="entry name" value="EFG_II"/>
</dbReference>
<dbReference type="InterPro" id="IPR009022">
    <property type="entry name" value="EFG_III"/>
</dbReference>
<dbReference type="InterPro" id="IPR035647">
    <property type="entry name" value="EFG_III/V"/>
</dbReference>
<dbReference type="InterPro" id="IPR047872">
    <property type="entry name" value="EFG_IV"/>
</dbReference>
<dbReference type="InterPro" id="IPR035649">
    <property type="entry name" value="EFG_V"/>
</dbReference>
<dbReference type="InterPro" id="IPR000640">
    <property type="entry name" value="EFG_V-like"/>
</dbReference>
<dbReference type="InterPro" id="IPR031157">
    <property type="entry name" value="G_TR_CS"/>
</dbReference>
<dbReference type="InterPro" id="IPR027417">
    <property type="entry name" value="P-loop_NTPase"/>
</dbReference>
<dbReference type="InterPro" id="IPR020568">
    <property type="entry name" value="Ribosomal_Su5_D2-typ_SF"/>
</dbReference>
<dbReference type="InterPro" id="IPR014721">
    <property type="entry name" value="Ribsml_uS5_D2-typ_fold_subgr"/>
</dbReference>
<dbReference type="InterPro" id="IPR005225">
    <property type="entry name" value="Small_GTP-bd"/>
</dbReference>
<dbReference type="InterPro" id="IPR000795">
    <property type="entry name" value="T_Tr_GTP-bd_dom"/>
</dbReference>
<dbReference type="InterPro" id="IPR009000">
    <property type="entry name" value="Transl_B-barrel_sf"/>
</dbReference>
<dbReference type="InterPro" id="IPR004540">
    <property type="entry name" value="Transl_elong_EFG/EF2"/>
</dbReference>
<dbReference type="InterPro" id="IPR005517">
    <property type="entry name" value="Transl_elong_EFG/EF2_IV"/>
</dbReference>
<dbReference type="NCBIfam" id="TIGR00484">
    <property type="entry name" value="EF-G"/>
    <property type="match status" value="1"/>
</dbReference>
<dbReference type="NCBIfam" id="NF009381">
    <property type="entry name" value="PRK12740.1-5"/>
    <property type="match status" value="1"/>
</dbReference>
<dbReference type="NCBIfam" id="TIGR00231">
    <property type="entry name" value="small_GTP"/>
    <property type="match status" value="1"/>
</dbReference>
<dbReference type="PANTHER" id="PTHR43261:SF1">
    <property type="entry name" value="RIBOSOME-RELEASING FACTOR 2, MITOCHONDRIAL"/>
    <property type="match status" value="1"/>
</dbReference>
<dbReference type="PANTHER" id="PTHR43261">
    <property type="entry name" value="TRANSLATION ELONGATION FACTOR G-RELATED"/>
    <property type="match status" value="1"/>
</dbReference>
<dbReference type="Pfam" id="PF22042">
    <property type="entry name" value="EF-G_D2"/>
    <property type="match status" value="1"/>
</dbReference>
<dbReference type="Pfam" id="PF00679">
    <property type="entry name" value="EFG_C"/>
    <property type="match status" value="1"/>
</dbReference>
<dbReference type="Pfam" id="PF14492">
    <property type="entry name" value="EFG_III"/>
    <property type="match status" value="1"/>
</dbReference>
<dbReference type="Pfam" id="PF03764">
    <property type="entry name" value="EFG_IV"/>
    <property type="match status" value="1"/>
</dbReference>
<dbReference type="Pfam" id="PF00009">
    <property type="entry name" value="GTP_EFTU"/>
    <property type="match status" value="1"/>
</dbReference>
<dbReference type="PRINTS" id="PR00315">
    <property type="entry name" value="ELONGATNFCT"/>
</dbReference>
<dbReference type="SMART" id="SM00838">
    <property type="entry name" value="EFG_C"/>
    <property type="match status" value="1"/>
</dbReference>
<dbReference type="SMART" id="SM00889">
    <property type="entry name" value="EFG_IV"/>
    <property type="match status" value="1"/>
</dbReference>
<dbReference type="SUPFAM" id="SSF54980">
    <property type="entry name" value="EF-G C-terminal domain-like"/>
    <property type="match status" value="2"/>
</dbReference>
<dbReference type="SUPFAM" id="SSF52540">
    <property type="entry name" value="P-loop containing nucleoside triphosphate hydrolases"/>
    <property type="match status" value="1"/>
</dbReference>
<dbReference type="SUPFAM" id="SSF54211">
    <property type="entry name" value="Ribosomal protein S5 domain 2-like"/>
    <property type="match status" value="1"/>
</dbReference>
<dbReference type="SUPFAM" id="SSF50447">
    <property type="entry name" value="Translation proteins"/>
    <property type="match status" value="1"/>
</dbReference>
<dbReference type="PROSITE" id="PS00301">
    <property type="entry name" value="G_TR_1"/>
    <property type="match status" value="1"/>
</dbReference>
<dbReference type="PROSITE" id="PS51722">
    <property type="entry name" value="G_TR_2"/>
    <property type="match status" value="1"/>
</dbReference>
<protein>
    <recommendedName>
        <fullName evidence="1">Elongation factor G</fullName>
        <shortName evidence="1">EF-G</shortName>
    </recommendedName>
</protein>
<name>EFG_RHILO</name>
<organism>
    <name type="scientific">Mesorhizobium japonicum (strain LMG 29417 / CECT 9101 / MAFF 303099)</name>
    <name type="common">Mesorhizobium loti (strain MAFF 303099)</name>
    <dbReference type="NCBI Taxonomy" id="266835"/>
    <lineage>
        <taxon>Bacteria</taxon>
        <taxon>Pseudomonadati</taxon>
        <taxon>Pseudomonadota</taxon>
        <taxon>Alphaproteobacteria</taxon>
        <taxon>Hyphomicrobiales</taxon>
        <taxon>Phyllobacteriaceae</taxon>
        <taxon>Mesorhizobium</taxon>
    </lineage>
</organism>
<accession>Q98N59</accession>
<reference key="1">
    <citation type="journal article" date="2000" name="DNA Res.">
        <title>Complete genome structure of the nitrogen-fixing symbiotic bacterium Mesorhizobium loti.</title>
        <authorList>
            <person name="Kaneko T."/>
            <person name="Nakamura Y."/>
            <person name="Sato S."/>
            <person name="Asamizu E."/>
            <person name="Kato T."/>
            <person name="Sasamoto S."/>
            <person name="Watanabe A."/>
            <person name="Idesawa K."/>
            <person name="Ishikawa A."/>
            <person name="Kawashima K."/>
            <person name="Kimura T."/>
            <person name="Kishida Y."/>
            <person name="Kiyokawa C."/>
            <person name="Kohara M."/>
            <person name="Matsumoto M."/>
            <person name="Matsuno A."/>
            <person name="Mochizuki Y."/>
            <person name="Nakayama S."/>
            <person name="Nakazaki N."/>
            <person name="Shimpo S."/>
            <person name="Sugimoto M."/>
            <person name="Takeuchi C."/>
            <person name="Yamada M."/>
            <person name="Tabata S."/>
        </authorList>
    </citation>
    <scope>NUCLEOTIDE SEQUENCE [LARGE SCALE GENOMIC DNA]</scope>
    <source>
        <strain>LMG 29417 / CECT 9101 / MAFF 303099</strain>
    </source>
</reference>